<gene>
    <name type="primary">MTA1</name>
</gene>
<keyword id="KW-0238">DNA-binding</keyword>
<keyword id="KW-0539">Nucleus</keyword>
<keyword id="KW-0804">Transcription</keyword>
<keyword id="KW-0805">Transcription regulation</keyword>
<feature type="chain" id="PRO_0000206023" description="Mating type protein mtA-1">
    <location>
        <begin position="1"/>
        <end position="301"/>
    </location>
</feature>
<feature type="DNA-binding region" description="Alpha box" evidence="2">
    <location>
        <begin position="49"/>
        <end position="104"/>
    </location>
</feature>
<reference key="1">
    <citation type="submission" date="1997-10" db="EMBL/GenBank/DDBJ databases">
        <authorList>
            <person name="Nixon J.E.G."/>
        </authorList>
    </citation>
    <scope>NUCLEOTIDE SEQUENCE [GENOMIC DNA]</scope>
</reference>
<sequence length="301" mass="33800">MSSVDQIVKTFANLPEGERNAAVNAILAMMPPGPGPVRQIPEPVPQAPAPKKKVNGFMGFRSYYSSLFSQFPQKARSPFMTILWQHDPFHNEWDFMCSVYSSIRNYLEQLNAQREKKITLQYWLHFAVPVMGVLGRENYLPTLGWDLVTMPNGTIDLMRIAMPLFRKNLQPMDGLCLFTKCQEGGLQVDNQHFVIAKLSDPSHDMIWFNKRPHYQQRHAAQTDSSEAGVSALFPRNHAVAAEADGVATVQLPHWMQQGDFGTESGYSPQFETLLGSILENGNATSNDSYNMALAMDVPMMG</sequence>
<organism>
    <name type="scientific">Sordaria fimicola</name>
    <dbReference type="NCBI Taxonomy" id="27338"/>
    <lineage>
        <taxon>Eukaryota</taxon>
        <taxon>Fungi</taxon>
        <taxon>Dikarya</taxon>
        <taxon>Ascomycota</taxon>
        <taxon>Pezizomycotina</taxon>
        <taxon>Sordariomycetes</taxon>
        <taxon>Sordariomycetidae</taxon>
        <taxon>Sordariales</taxon>
        <taxon>Sordariaceae</taxon>
        <taxon>Sordaria</taxon>
    </lineage>
</organism>
<dbReference type="EMBL" id="Y15168">
    <property type="protein sequence ID" value="CAA75438.1"/>
    <property type="molecule type" value="Genomic_DNA"/>
</dbReference>
<dbReference type="GO" id="GO:0005634">
    <property type="term" value="C:nucleus"/>
    <property type="evidence" value="ECO:0007669"/>
    <property type="project" value="UniProtKB-SubCell"/>
</dbReference>
<dbReference type="GO" id="GO:0008301">
    <property type="term" value="F:DNA binding, bending"/>
    <property type="evidence" value="ECO:0007669"/>
    <property type="project" value="InterPro"/>
</dbReference>
<dbReference type="GO" id="GO:0045895">
    <property type="term" value="P:positive regulation of mating-type specific transcription, DNA-templated"/>
    <property type="evidence" value="ECO:0007669"/>
    <property type="project" value="InterPro"/>
</dbReference>
<dbReference type="InterPro" id="IPR006856">
    <property type="entry name" value="MATalpha_HMGbox"/>
</dbReference>
<dbReference type="Pfam" id="PF04769">
    <property type="entry name" value="MATalpha_HMGbox"/>
    <property type="match status" value="1"/>
</dbReference>
<dbReference type="PROSITE" id="PS51325">
    <property type="entry name" value="ALPHA_BOX"/>
    <property type="match status" value="1"/>
</dbReference>
<protein>
    <recommendedName>
        <fullName>Mating type protein mtA-1</fullName>
    </recommendedName>
</protein>
<proteinExistence type="inferred from homology"/>
<accession>O13596</accession>
<comment type="function">
    <text evidence="1">Mating type proteins are sequence specific DNA-binding proteins that act as master switches in fungal differentiation by controlling gene expression in a cell type-specific fashion. Transcriptional activator that induces the transcription of alpha-specific genes.</text>
</comment>
<comment type="subcellular location">
    <subcellularLocation>
        <location evidence="2">Nucleus</location>
    </subcellularLocation>
</comment>
<comment type="similarity">
    <text evidence="2">Belongs to the MATALPHA1 family.</text>
</comment>
<evidence type="ECO:0000250" key="1">
    <source>
        <dbReference type="UniProtKB" id="P0CY06"/>
    </source>
</evidence>
<evidence type="ECO:0000255" key="2">
    <source>
        <dbReference type="PROSITE-ProRule" id="PRU00655"/>
    </source>
</evidence>
<name>MTA1_SORFI</name>